<feature type="initiator methionine" description="Removed" evidence="2">
    <location>
        <position position="1"/>
    </location>
</feature>
<feature type="chain" id="PRO_0000190063" description="Golgin subfamily A member 5">
    <location>
        <begin position="2"/>
        <end position="728"/>
    </location>
</feature>
<feature type="topological domain" description="Cytoplasmic" evidence="3">
    <location>
        <begin position="2"/>
        <end position="695"/>
    </location>
</feature>
<feature type="transmembrane region" description="Helical; Anchor for type IV membrane protein" evidence="3">
    <location>
        <begin position="696"/>
        <end position="716"/>
    </location>
</feature>
<feature type="topological domain" description="Lumenal" evidence="3">
    <location>
        <begin position="717"/>
        <end position="728"/>
    </location>
</feature>
<feature type="region of interest" description="Disordered" evidence="4">
    <location>
        <begin position="88"/>
        <end position="202"/>
    </location>
</feature>
<feature type="coiled-coil region" evidence="3">
    <location>
        <begin position="216"/>
        <end position="628"/>
    </location>
</feature>
<feature type="compositionally biased region" description="Basic and acidic residues" evidence="4">
    <location>
        <begin position="134"/>
        <end position="146"/>
    </location>
</feature>
<feature type="compositionally biased region" description="Low complexity" evidence="4">
    <location>
        <begin position="152"/>
        <end position="167"/>
    </location>
</feature>
<feature type="compositionally biased region" description="Polar residues" evidence="4">
    <location>
        <begin position="173"/>
        <end position="187"/>
    </location>
</feature>
<feature type="modified residue" description="N-acetylserine" evidence="2">
    <location>
        <position position="2"/>
    </location>
</feature>
<feature type="modified residue" description="Dimethylated arginine" evidence="6">
    <location>
        <position position="27"/>
    </location>
</feature>
<feature type="modified residue" description="Dimethylated arginine" evidence="6">
    <location>
        <position position="89"/>
    </location>
</feature>
<feature type="modified residue" description="Phosphoserine" evidence="8">
    <location>
        <position position="116"/>
    </location>
</feature>
<dbReference type="EMBL" id="AY144587">
    <property type="protein sequence ID" value="AAN17671.1"/>
    <property type="molecule type" value="mRNA"/>
</dbReference>
<dbReference type="RefSeq" id="NP_001028237.1">
    <property type="nucleotide sequence ID" value="NM_001033065.1"/>
</dbReference>
<dbReference type="SMR" id="Q3ZU82"/>
<dbReference type="FunCoup" id="Q3ZU82">
    <property type="interactions" value="1826"/>
</dbReference>
<dbReference type="STRING" id="10116.ENSRNOP00000010385"/>
<dbReference type="iPTMnet" id="Q3ZU82"/>
<dbReference type="PhosphoSitePlus" id="Q3ZU82"/>
<dbReference type="jPOST" id="Q3ZU82"/>
<dbReference type="PaxDb" id="10116-ENSRNOP00000010385"/>
<dbReference type="PeptideAtlas" id="Q3ZU82"/>
<dbReference type="GeneID" id="299258"/>
<dbReference type="KEGG" id="rno:299258"/>
<dbReference type="UCSC" id="RGD:1308163">
    <property type="organism name" value="rat"/>
</dbReference>
<dbReference type="AGR" id="RGD:1308163"/>
<dbReference type="CTD" id="9950"/>
<dbReference type="RGD" id="1308163">
    <property type="gene designation" value="Golga5"/>
</dbReference>
<dbReference type="eggNOG" id="KOG4677">
    <property type="taxonomic scope" value="Eukaryota"/>
</dbReference>
<dbReference type="InParanoid" id="Q3ZU82"/>
<dbReference type="PhylomeDB" id="Q3ZU82"/>
<dbReference type="PRO" id="PR:Q3ZU82"/>
<dbReference type="Proteomes" id="UP000002494">
    <property type="component" value="Unplaced"/>
</dbReference>
<dbReference type="GO" id="GO:0005801">
    <property type="term" value="C:cis-Golgi network"/>
    <property type="evidence" value="ECO:0000266"/>
    <property type="project" value="RGD"/>
</dbReference>
<dbReference type="GO" id="GO:0030663">
    <property type="term" value="C:COPI-coated vesicle membrane"/>
    <property type="evidence" value="ECO:0000314"/>
    <property type="project" value="RGD"/>
</dbReference>
<dbReference type="GO" id="GO:0005794">
    <property type="term" value="C:Golgi apparatus"/>
    <property type="evidence" value="ECO:0000250"/>
    <property type="project" value="UniProtKB"/>
</dbReference>
<dbReference type="GO" id="GO:0000137">
    <property type="term" value="C:Golgi cis cisterna"/>
    <property type="evidence" value="ECO:0000314"/>
    <property type="project" value="RGD"/>
</dbReference>
<dbReference type="GO" id="GO:0031985">
    <property type="term" value="C:Golgi cisterna"/>
    <property type="evidence" value="ECO:0000266"/>
    <property type="project" value="RGD"/>
</dbReference>
<dbReference type="GO" id="GO:0005797">
    <property type="term" value="C:Golgi medial cisterna"/>
    <property type="evidence" value="ECO:0000314"/>
    <property type="project" value="RGD"/>
</dbReference>
<dbReference type="GO" id="GO:0000139">
    <property type="term" value="C:Golgi membrane"/>
    <property type="evidence" value="ECO:0000314"/>
    <property type="project" value="RGD"/>
</dbReference>
<dbReference type="GO" id="GO:0000138">
    <property type="term" value="C:Golgi trans cisterna"/>
    <property type="evidence" value="ECO:0000314"/>
    <property type="project" value="RGD"/>
</dbReference>
<dbReference type="GO" id="GO:0016020">
    <property type="term" value="C:membrane"/>
    <property type="evidence" value="ECO:0000266"/>
    <property type="project" value="RGD"/>
</dbReference>
<dbReference type="GO" id="GO:0042803">
    <property type="term" value="F:protein homodimerization activity"/>
    <property type="evidence" value="ECO:0000250"/>
    <property type="project" value="UniProtKB"/>
</dbReference>
<dbReference type="GO" id="GO:0030674">
    <property type="term" value="F:protein-macromolecule adaptor activity"/>
    <property type="evidence" value="ECO:0000353"/>
    <property type="project" value="RGD"/>
</dbReference>
<dbReference type="GO" id="GO:0031267">
    <property type="term" value="F:small GTPase binding"/>
    <property type="evidence" value="ECO:0000314"/>
    <property type="project" value="RGD"/>
</dbReference>
<dbReference type="GO" id="GO:0007030">
    <property type="term" value="P:Golgi organization"/>
    <property type="evidence" value="ECO:0000314"/>
    <property type="project" value="RGD"/>
</dbReference>
<dbReference type="GO" id="GO:0048193">
    <property type="term" value="P:Golgi vesicle transport"/>
    <property type="evidence" value="ECO:0000250"/>
    <property type="project" value="UniProtKB"/>
</dbReference>
<dbReference type="GO" id="GO:0000301">
    <property type="term" value="P:retrograde transport, vesicle recycling within Golgi"/>
    <property type="evidence" value="ECO:0000315"/>
    <property type="project" value="RGD"/>
</dbReference>
<dbReference type="FunFam" id="1.10.287.1490:FF:000009">
    <property type="entry name" value="Golgin subfamily A member 5"/>
    <property type="match status" value="1"/>
</dbReference>
<dbReference type="Gene3D" id="1.20.5.1700">
    <property type="match status" value="1"/>
</dbReference>
<dbReference type="InterPro" id="IPR019177">
    <property type="entry name" value="Golgin_subfamily_A_member_5"/>
</dbReference>
<dbReference type="PANTHER" id="PTHR13815:SF7">
    <property type="entry name" value="GOLGIN SUBFAMILY A MEMBER 5"/>
    <property type="match status" value="1"/>
</dbReference>
<dbReference type="PANTHER" id="PTHR13815">
    <property type="entry name" value="GOLGIN-84"/>
    <property type="match status" value="1"/>
</dbReference>
<dbReference type="Pfam" id="PF09787">
    <property type="entry name" value="Golgin_A5"/>
    <property type="match status" value="1"/>
</dbReference>
<sequence length="728" mass="82334">MSWFADLAGRAEDLLNRVDQGAATALRKESTSNTFYSKNTDYPELHQQNTDSTYHTGQKANYISSAADNIRHQKATIIAGTANVKVGSRTGGDASHPTEHASVPRPSSHFVRRKKSEPDDELLFDFLNSSQKEPTGRVEIKKEKGKAPVLPSSQSSAVSSVTTSVTTIKATEENSGSQSPEVSSSDSMPEGHKKSTEESTVSNAISVEHSSVPSDGSMSHELSNLRLENQLLRNEVQSLNQEMASLLQRSKETQEELNEARVRVEKWNVDNSKSDRITRELRAQVDDLTEAVAAKDSQLAVLKVRLQEADQVLSSRTEALEALQSEKSRIMQDHNEGSSLQNQALQTLQERHEADATLKREQESYKQMQSEFATRLNKMEVERQNLAEAVTLAERKYSEERKKVDDLQQQVKLHRSSLESAKQELVDYKQKATRILQSKEKLINSLKEGSSFEGLDSSTASSMELEELRHERELQKEEIQKLMGQIHQLRSELQDMEAQQVSEAESAREQLQDLQDQIAKQRASKQELETELDRMKQEFHYVEEDLHRTKNTLQSRIKDREEEIQKLRNQLTNKTLSNSSQSELESRLHQLTETLIQKQTLLESLSTEKNSLVFQLERLEQQLHSAATGPSSGSSINMSGVDSGEGTRLRNVPVLFNDTETNLAGMYGKVRKAASSIDQFSIRLGIFLRRYPIARVFVIIYMALLHLWVMIVLLTYSPEMHHDQPYGK</sequence>
<evidence type="ECO:0000250" key="1"/>
<evidence type="ECO:0000250" key="2">
    <source>
        <dbReference type="UniProtKB" id="Q8TBA6"/>
    </source>
</evidence>
<evidence type="ECO:0000255" key="3"/>
<evidence type="ECO:0000256" key="4">
    <source>
        <dbReference type="SAM" id="MobiDB-lite"/>
    </source>
</evidence>
<evidence type="ECO:0000269" key="5">
    <source>
    </source>
</evidence>
<evidence type="ECO:0000269" key="6">
    <source>
    </source>
</evidence>
<evidence type="ECO:0000269" key="7">
    <source>
    </source>
</evidence>
<evidence type="ECO:0007744" key="8">
    <source>
    </source>
</evidence>
<gene>
    <name type="primary">Golga5</name>
</gene>
<keyword id="KW-0007">Acetylation</keyword>
<keyword id="KW-0175">Coiled coil</keyword>
<keyword id="KW-0333">Golgi apparatus</keyword>
<keyword id="KW-0472">Membrane</keyword>
<keyword id="KW-0488">Methylation</keyword>
<keyword id="KW-0597">Phosphoprotein</keyword>
<keyword id="KW-1185">Reference proteome</keyword>
<keyword id="KW-0812">Transmembrane</keyword>
<keyword id="KW-1133">Transmembrane helix</keyword>
<comment type="function">
    <text evidence="5 7">Involved in maintaining Golgi structure. Stimulates the formation of Golgi stacks and ribbons. Involved in intra-Golgi retrograde transport.</text>
</comment>
<comment type="subunit">
    <text evidence="5 7">Homodimer. Interacts with RAB1A that has been activated by GTP-binding. Interacts with isoform CASP of CUX1.</text>
</comment>
<comment type="subcellular location">
    <subcellularLocation>
        <location evidence="5">Golgi apparatus membrane</location>
        <topology evidence="5">Single-pass type IV membrane protein</topology>
    </subcellularLocation>
    <text>Found throughout the Golgi.</text>
</comment>
<comment type="PTM">
    <text evidence="1">Highly phosphorylated during mitosis. Phosphorylation is barely detectable during interphase (By similarity).</text>
</comment>
<name>GOGA5_RAT</name>
<protein>
    <recommendedName>
        <fullName>Golgin subfamily A member 5</fullName>
    </recommendedName>
    <alternativeName>
        <fullName>Golgin-84</fullName>
    </alternativeName>
</protein>
<proteinExistence type="evidence at protein level"/>
<accession>Q3ZU82</accession>
<organism>
    <name type="scientific">Rattus norvegicus</name>
    <name type="common">Rat</name>
    <dbReference type="NCBI Taxonomy" id="10116"/>
    <lineage>
        <taxon>Eukaryota</taxon>
        <taxon>Metazoa</taxon>
        <taxon>Chordata</taxon>
        <taxon>Craniata</taxon>
        <taxon>Vertebrata</taxon>
        <taxon>Euteleostomi</taxon>
        <taxon>Mammalia</taxon>
        <taxon>Eutheria</taxon>
        <taxon>Euarchontoglires</taxon>
        <taxon>Glires</taxon>
        <taxon>Rodentia</taxon>
        <taxon>Myomorpha</taxon>
        <taxon>Muroidea</taxon>
        <taxon>Muridae</taxon>
        <taxon>Murinae</taxon>
        <taxon>Rattus</taxon>
    </lineage>
</organism>
<reference key="1">
    <citation type="journal article" date="2003" name="Traffic">
        <title>Golgin-84 is a rab1 binding partner involved in Golgi structure.</title>
        <authorList>
            <person name="Satoh A."/>
            <person name="Wang Y."/>
            <person name="Malsam J."/>
            <person name="Beard M.B."/>
            <person name="Warren G."/>
        </authorList>
    </citation>
    <scope>NUCLEOTIDE SEQUENCE [MRNA]</scope>
    <scope>INTERACTION WITH RAB1A</scope>
    <scope>FUNCTION</scope>
    <scope>SUBCELLULAR LOCATION</scope>
    <source>
        <tissue>Liver</tissue>
    </source>
</reference>
<reference key="2">
    <citation type="journal article" date="2004" name="Mol. Biol. Cell">
        <title>Organellar proteomics reveals Golgi arginine dimethylation.</title>
        <authorList>
            <person name="Wu C.C."/>
            <person name="MacCoss M.J."/>
            <person name="Mardones G."/>
            <person name="Finnigan C."/>
            <person name="Mogelsvang S."/>
            <person name="Yates J.R. III"/>
            <person name="Howell K.E."/>
        </authorList>
    </citation>
    <scope>METHYLATION AT ARG-27 AND ARG-89</scope>
    <scope>IDENTIFICATION BY MASS SPECTROMETRY</scope>
</reference>
<reference key="3">
    <citation type="journal article" date="2005" name="Science">
        <title>Golgin tethers define subpopulations of COPI vesicles.</title>
        <authorList>
            <person name="Malsam J."/>
            <person name="Satoh A."/>
            <person name="Pelletier L."/>
            <person name="Warren G."/>
        </authorList>
    </citation>
    <scope>FUNCTION</scope>
    <scope>INTERACTION WITH CUX1</scope>
</reference>
<reference key="4">
    <citation type="journal article" date="2012" name="Nat. Commun.">
        <title>Quantitative maps of protein phosphorylation sites across 14 different rat organs and tissues.</title>
        <authorList>
            <person name="Lundby A."/>
            <person name="Secher A."/>
            <person name="Lage K."/>
            <person name="Nordsborg N.B."/>
            <person name="Dmytriyev A."/>
            <person name="Lundby C."/>
            <person name="Olsen J.V."/>
        </authorList>
    </citation>
    <scope>PHOSPHORYLATION [LARGE SCALE ANALYSIS] AT SER-116</scope>
    <scope>IDENTIFICATION BY MASS SPECTROMETRY [LARGE SCALE ANALYSIS]</scope>
</reference>